<proteinExistence type="inferred from homology"/>
<gene>
    <name evidence="1" type="primary">rpsB</name>
    <name evidence="1" type="synonym">rps2</name>
    <name type="ordered locus">P9303_16641</name>
</gene>
<dbReference type="EMBL" id="CP000554">
    <property type="protein sequence ID" value="ABM78408.1"/>
    <property type="molecule type" value="Genomic_DNA"/>
</dbReference>
<dbReference type="RefSeq" id="WP_011826296.1">
    <property type="nucleotide sequence ID" value="NC_008820.1"/>
</dbReference>
<dbReference type="SMR" id="A2CA98"/>
<dbReference type="STRING" id="59922.P9303_16641"/>
<dbReference type="KEGG" id="pmf:P9303_16641"/>
<dbReference type="HOGENOM" id="CLU_040318_1_2_3"/>
<dbReference type="BioCyc" id="PMAR59922:G1G80-1446-MONOMER"/>
<dbReference type="Proteomes" id="UP000002274">
    <property type="component" value="Chromosome"/>
</dbReference>
<dbReference type="GO" id="GO:0022627">
    <property type="term" value="C:cytosolic small ribosomal subunit"/>
    <property type="evidence" value="ECO:0007669"/>
    <property type="project" value="TreeGrafter"/>
</dbReference>
<dbReference type="GO" id="GO:0003735">
    <property type="term" value="F:structural constituent of ribosome"/>
    <property type="evidence" value="ECO:0007669"/>
    <property type="project" value="InterPro"/>
</dbReference>
<dbReference type="GO" id="GO:0006412">
    <property type="term" value="P:translation"/>
    <property type="evidence" value="ECO:0007669"/>
    <property type="project" value="UniProtKB-UniRule"/>
</dbReference>
<dbReference type="CDD" id="cd01425">
    <property type="entry name" value="RPS2"/>
    <property type="match status" value="1"/>
</dbReference>
<dbReference type="FunFam" id="1.10.287.610:FF:000001">
    <property type="entry name" value="30S ribosomal protein S2"/>
    <property type="match status" value="1"/>
</dbReference>
<dbReference type="Gene3D" id="3.40.50.10490">
    <property type="entry name" value="Glucose-6-phosphate isomerase like protein, domain 1"/>
    <property type="match status" value="1"/>
</dbReference>
<dbReference type="Gene3D" id="1.10.287.610">
    <property type="entry name" value="Helix hairpin bin"/>
    <property type="match status" value="1"/>
</dbReference>
<dbReference type="HAMAP" id="MF_00291_B">
    <property type="entry name" value="Ribosomal_uS2_B"/>
    <property type="match status" value="1"/>
</dbReference>
<dbReference type="InterPro" id="IPR001865">
    <property type="entry name" value="Ribosomal_uS2"/>
</dbReference>
<dbReference type="InterPro" id="IPR005706">
    <property type="entry name" value="Ribosomal_uS2_bac/mit/plastid"/>
</dbReference>
<dbReference type="InterPro" id="IPR018130">
    <property type="entry name" value="Ribosomal_uS2_CS"/>
</dbReference>
<dbReference type="InterPro" id="IPR023591">
    <property type="entry name" value="Ribosomal_uS2_flav_dom_sf"/>
</dbReference>
<dbReference type="NCBIfam" id="TIGR01011">
    <property type="entry name" value="rpsB_bact"/>
    <property type="match status" value="1"/>
</dbReference>
<dbReference type="PANTHER" id="PTHR12534">
    <property type="entry name" value="30S RIBOSOMAL PROTEIN S2 PROKARYOTIC AND ORGANELLAR"/>
    <property type="match status" value="1"/>
</dbReference>
<dbReference type="PANTHER" id="PTHR12534:SF0">
    <property type="entry name" value="SMALL RIBOSOMAL SUBUNIT PROTEIN US2M"/>
    <property type="match status" value="1"/>
</dbReference>
<dbReference type="Pfam" id="PF00318">
    <property type="entry name" value="Ribosomal_S2"/>
    <property type="match status" value="1"/>
</dbReference>
<dbReference type="PRINTS" id="PR00395">
    <property type="entry name" value="RIBOSOMALS2"/>
</dbReference>
<dbReference type="SUPFAM" id="SSF52313">
    <property type="entry name" value="Ribosomal protein S2"/>
    <property type="match status" value="1"/>
</dbReference>
<dbReference type="PROSITE" id="PS00962">
    <property type="entry name" value="RIBOSOMAL_S2_1"/>
    <property type="match status" value="1"/>
</dbReference>
<comment type="similarity">
    <text evidence="1">Belongs to the universal ribosomal protein uS2 family.</text>
</comment>
<keyword id="KW-0687">Ribonucleoprotein</keyword>
<keyword id="KW-0689">Ribosomal protein</keyword>
<sequence>MAVVTLSEMMEAGAHFGHQTRRWNPKMSRYIYCARNGVHIIDLVQTAICMNNAYKWTRSSARSGKRFLFVGTKKQASEVVALEATRCGASYVNQRWLGGMLTNWTTMKARIDRLKDLERMESSGAIAMRPKKEASVLRRELERLQKYLGGLKGMRRLPDVVVLVDQRRETNAVLEARKLDIPLVSMLDTNCDPDLCEVPIPCNDDAVRSVQLVLGRLADAINEGRHGTNEQRGADDNDD</sequence>
<name>RS2_PROM3</name>
<evidence type="ECO:0000255" key="1">
    <source>
        <dbReference type="HAMAP-Rule" id="MF_00291"/>
    </source>
</evidence>
<evidence type="ECO:0000305" key="2"/>
<organism>
    <name type="scientific">Prochlorococcus marinus (strain MIT 9303)</name>
    <dbReference type="NCBI Taxonomy" id="59922"/>
    <lineage>
        <taxon>Bacteria</taxon>
        <taxon>Bacillati</taxon>
        <taxon>Cyanobacteriota</taxon>
        <taxon>Cyanophyceae</taxon>
        <taxon>Synechococcales</taxon>
        <taxon>Prochlorococcaceae</taxon>
        <taxon>Prochlorococcus</taxon>
    </lineage>
</organism>
<feature type="chain" id="PRO_1000004023" description="Small ribosomal subunit protein uS2">
    <location>
        <begin position="1"/>
        <end position="239"/>
    </location>
</feature>
<accession>A2CA98</accession>
<protein>
    <recommendedName>
        <fullName evidence="1">Small ribosomal subunit protein uS2</fullName>
    </recommendedName>
    <alternativeName>
        <fullName evidence="2">30S ribosomal protein S2</fullName>
    </alternativeName>
</protein>
<reference key="1">
    <citation type="journal article" date="2007" name="PLoS Genet.">
        <title>Patterns and implications of gene gain and loss in the evolution of Prochlorococcus.</title>
        <authorList>
            <person name="Kettler G.C."/>
            <person name="Martiny A.C."/>
            <person name="Huang K."/>
            <person name="Zucker J."/>
            <person name="Coleman M.L."/>
            <person name="Rodrigue S."/>
            <person name="Chen F."/>
            <person name="Lapidus A."/>
            <person name="Ferriera S."/>
            <person name="Johnson J."/>
            <person name="Steglich C."/>
            <person name="Church G.M."/>
            <person name="Richardson P."/>
            <person name="Chisholm S.W."/>
        </authorList>
    </citation>
    <scope>NUCLEOTIDE SEQUENCE [LARGE SCALE GENOMIC DNA]</scope>
    <source>
        <strain>MIT 9303</strain>
    </source>
</reference>